<accession>B5Z8V2</accession>
<feature type="chain" id="PRO_1000143999" description="Large ribosomal subunit protein uL6">
    <location>
        <begin position="1"/>
        <end position="178"/>
    </location>
</feature>
<proteinExistence type="inferred from homology"/>
<dbReference type="EMBL" id="CP001173">
    <property type="protein sequence ID" value="ACI28001.1"/>
    <property type="molecule type" value="Genomic_DNA"/>
</dbReference>
<dbReference type="RefSeq" id="WP_000086603.1">
    <property type="nucleotide sequence ID" value="NC_011333.1"/>
</dbReference>
<dbReference type="SMR" id="B5Z8V2"/>
<dbReference type="KEGG" id="hpg:HPG27_1253"/>
<dbReference type="HOGENOM" id="CLU_065464_1_2_7"/>
<dbReference type="Proteomes" id="UP000001735">
    <property type="component" value="Chromosome"/>
</dbReference>
<dbReference type="GO" id="GO:0022625">
    <property type="term" value="C:cytosolic large ribosomal subunit"/>
    <property type="evidence" value="ECO:0007669"/>
    <property type="project" value="TreeGrafter"/>
</dbReference>
<dbReference type="GO" id="GO:0019843">
    <property type="term" value="F:rRNA binding"/>
    <property type="evidence" value="ECO:0007669"/>
    <property type="project" value="UniProtKB-UniRule"/>
</dbReference>
<dbReference type="GO" id="GO:0003735">
    <property type="term" value="F:structural constituent of ribosome"/>
    <property type="evidence" value="ECO:0007669"/>
    <property type="project" value="InterPro"/>
</dbReference>
<dbReference type="GO" id="GO:0002181">
    <property type="term" value="P:cytoplasmic translation"/>
    <property type="evidence" value="ECO:0007669"/>
    <property type="project" value="TreeGrafter"/>
</dbReference>
<dbReference type="FunFam" id="3.90.930.12:FF:000001">
    <property type="entry name" value="50S ribosomal protein L6"/>
    <property type="match status" value="1"/>
</dbReference>
<dbReference type="Gene3D" id="3.90.930.12">
    <property type="entry name" value="Ribosomal protein L6, alpha-beta domain"/>
    <property type="match status" value="2"/>
</dbReference>
<dbReference type="HAMAP" id="MF_01365_B">
    <property type="entry name" value="Ribosomal_uL6_B"/>
    <property type="match status" value="1"/>
</dbReference>
<dbReference type="InterPro" id="IPR000702">
    <property type="entry name" value="Ribosomal_uL6-like"/>
</dbReference>
<dbReference type="InterPro" id="IPR036789">
    <property type="entry name" value="Ribosomal_uL6-like_a/b-dom_sf"/>
</dbReference>
<dbReference type="InterPro" id="IPR020040">
    <property type="entry name" value="Ribosomal_uL6_a/b-dom"/>
</dbReference>
<dbReference type="InterPro" id="IPR019906">
    <property type="entry name" value="Ribosomal_uL6_bac-type"/>
</dbReference>
<dbReference type="InterPro" id="IPR002358">
    <property type="entry name" value="Ribosomal_uL6_CS"/>
</dbReference>
<dbReference type="NCBIfam" id="TIGR03654">
    <property type="entry name" value="L6_bact"/>
    <property type="match status" value="1"/>
</dbReference>
<dbReference type="PANTHER" id="PTHR11655">
    <property type="entry name" value="60S/50S RIBOSOMAL PROTEIN L6/L9"/>
    <property type="match status" value="1"/>
</dbReference>
<dbReference type="PANTHER" id="PTHR11655:SF14">
    <property type="entry name" value="LARGE RIBOSOMAL SUBUNIT PROTEIN UL6M"/>
    <property type="match status" value="1"/>
</dbReference>
<dbReference type="Pfam" id="PF00347">
    <property type="entry name" value="Ribosomal_L6"/>
    <property type="match status" value="1"/>
</dbReference>
<dbReference type="PIRSF" id="PIRSF002162">
    <property type="entry name" value="Ribosomal_L6"/>
    <property type="match status" value="1"/>
</dbReference>
<dbReference type="PRINTS" id="PR00059">
    <property type="entry name" value="RIBOSOMALL6"/>
</dbReference>
<dbReference type="SUPFAM" id="SSF56053">
    <property type="entry name" value="Ribosomal protein L6"/>
    <property type="match status" value="2"/>
</dbReference>
<dbReference type="PROSITE" id="PS00525">
    <property type="entry name" value="RIBOSOMAL_L6_1"/>
    <property type="match status" value="1"/>
</dbReference>
<reference key="1">
    <citation type="journal article" date="2009" name="J. Bacteriol.">
        <title>The complete genome sequence of Helicobacter pylori strain G27.</title>
        <authorList>
            <person name="Baltrus D.A."/>
            <person name="Amieva M.R."/>
            <person name="Covacci A."/>
            <person name="Lowe T.M."/>
            <person name="Merrell D.S."/>
            <person name="Ottemann K.M."/>
            <person name="Stein M."/>
            <person name="Salama N.R."/>
            <person name="Guillemin K."/>
        </authorList>
    </citation>
    <scope>NUCLEOTIDE SEQUENCE [LARGE SCALE GENOMIC DNA]</scope>
    <source>
        <strain>G27</strain>
    </source>
</reference>
<protein>
    <recommendedName>
        <fullName evidence="1">Large ribosomal subunit protein uL6</fullName>
    </recommendedName>
    <alternativeName>
        <fullName evidence="2">50S ribosomal protein L6</fullName>
    </alternativeName>
</protein>
<keyword id="KW-1185">Reference proteome</keyword>
<keyword id="KW-0687">Ribonucleoprotein</keyword>
<keyword id="KW-0689">Ribosomal protein</keyword>
<keyword id="KW-0694">RNA-binding</keyword>
<keyword id="KW-0699">rRNA-binding</keyword>
<comment type="function">
    <text evidence="1">This protein binds to the 23S rRNA, and is important in its secondary structure. It is located near the subunit interface in the base of the L7/L12 stalk, and near the tRNA binding site of the peptidyltransferase center.</text>
</comment>
<comment type="subunit">
    <text evidence="1">Part of the 50S ribosomal subunit.</text>
</comment>
<comment type="similarity">
    <text evidence="1">Belongs to the universal ribosomal protein uL6 family.</text>
</comment>
<evidence type="ECO:0000255" key="1">
    <source>
        <dbReference type="HAMAP-Rule" id="MF_01365"/>
    </source>
</evidence>
<evidence type="ECO:0000305" key="2"/>
<sequence length="178" mass="19474">MSRIGKRIIEIPSSVQASVEGSKLLFKNSKEKHELETHNRVKITLENNQLSFQPVGEDAQSRAYWGTYGALANNIVTGLSTGFSKTLEVNGVGYKVALGNKTLDLSLGFSHPVKYPIPAGIEMVVEKNTITIKGSDKQKVGQVAAEIRSFRPPEPYKGKGVKYSDEVIIRKAGKTAKK</sequence>
<organism>
    <name type="scientific">Helicobacter pylori (strain G27)</name>
    <dbReference type="NCBI Taxonomy" id="563041"/>
    <lineage>
        <taxon>Bacteria</taxon>
        <taxon>Pseudomonadati</taxon>
        <taxon>Campylobacterota</taxon>
        <taxon>Epsilonproteobacteria</taxon>
        <taxon>Campylobacterales</taxon>
        <taxon>Helicobacteraceae</taxon>
        <taxon>Helicobacter</taxon>
    </lineage>
</organism>
<name>RL6_HELPG</name>
<gene>
    <name evidence="1" type="primary">rplF</name>
    <name type="ordered locus">HPG27_1253</name>
</gene>